<comment type="function">
    <text evidence="1">Cytoplasmic intermediate filaments provide mechanical strength to cells.</text>
</comment>
<comment type="subcellular location">
    <subcellularLocation>
        <location evidence="1">Cytoplasm</location>
    </subcellularLocation>
</comment>
<comment type="similarity">
    <text evidence="4">Belongs to the intermediate filament family.</text>
</comment>
<comment type="sequence caution" evidence="5">
    <conflict type="erroneous gene model prediction">
        <sequence resource="EMBL-CDS" id="CAP28026"/>
    </conflict>
</comment>
<reference key="1">
    <citation type="journal article" date="2003" name="PLoS Biol.">
        <title>The genome sequence of Caenorhabditis briggsae: a platform for comparative genomics.</title>
        <authorList>
            <person name="Stein L.D."/>
            <person name="Bao Z."/>
            <person name="Blasiar D."/>
            <person name="Blumenthal T."/>
            <person name="Brent M.R."/>
            <person name="Chen N."/>
            <person name="Chinwalla A."/>
            <person name="Clarke L."/>
            <person name="Clee C."/>
            <person name="Coghlan A."/>
            <person name="Coulson A."/>
            <person name="D'Eustachio P."/>
            <person name="Fitch D.H.A."/>
            <person name="Fulton L.A."/>
            <person name="Fulton R.E."/>
            <person name="Griffiths-Jones S."/>
            <person name="Harris T.W."/>
            <person name="Hillier L.W."/>
            <person name="Kamath R."/>
            <person name="Kuwabara P.E."/>
            <person name="Mardis E.R."/>
            <person name="Marra M.A."/>
            <person name="Miner T.L."/>
            <person name="Minx P."/>
            <person name="Mullikin J.C."/>
            <person name="Plumb R.W."/>
            <person name="Rogers J."/>
            <person name="Schein J.E."/>
            <person name="Sohrmann M."/>
            <person name="Spieth J."/>
            <person name="Stajich J.E."/>
            <person name="Wei C."/>
            <person name="Willey D."/>
            <person name="Wilson R.K."/>
            <person name="Durbin R.M."/>
            <person name="Waterston R.H."/>
        </authorList>
    </citation>
    <scope>NUCLEOTIDE SEQUENCE [LARGE SCALE GENOMIC DNA]</scope>
    <source>
        <strain>AF16</strain>
    </source>
</reference>
<accession>Q5WN60</accession>
<accession>A8X5W5</accession>
<name>IFC2_CAEBR</name>
<evidence type="ECO:0000250" key="1"/>
<evidence type="ECO:0000250" key="2">
    <source>
        <dbReference type="UniProtKB" id="Q21067"/>
    </source>
</evidence>
<evidence type="ECO:0000255" key="3">
    <source>
        <dbReference type="PROSITE-ProRule" id="PRU01187"/>
    </source>
</evidence>
<evidence type="ECO:0000255" key="4">
    <source>
        <dbReference type="PROSITE-ProRule" id="PRU01188"/>
    </source>
</evidence>
<evidence type="ECO:0000305" key="5"/>
<proteinExistence type="inferred from homology"/>
<organism>
    <name type="scientific">Caenorhabditis briggsae</name>
    <dbReference type="NCBI Taxonomy" id="6238"/>
    <lineage>
        <taxon>Eukaryota</taxon>
        <taxon>Metazoa</taxon>
        <taxon>Ecdysozoa</taxon>
        <taxon>Nematoda</taxon>
        <taxon>Chromadorea</taxon>
        <taxon>Rhabditida</taxon>
        <taxon>Rhabditina</taxon>
        <taxon>Rhabditomorpha</taxon>
        <taxon>Rhabditoidea</taxon>
        <taxon>Rhabditidae</taxon>
        <taxon>Peloderinae</taxon>
        <taxon>Caenorhabditis</taxon>
    </lineage>
</organism>
<keyword id="KW-0175">Coiled coil</keyword>
<keyword id="KW-0963">Cytoplasm</keyword>
<keyword id="KW-0403">Intermediate filament</keyword>
<keyword id="KW-1185">Reference proteome</keyword>
<feature type="chain" id="PRO_0000063841" description="Intermediate filament protein ifc-2">
    <location>
        <begin position="1"/>
        <end position="621"/>
    </location>
</feature>
<feature type="domain" description="IF rod" evidence="4">
    <location>
        <begin position="52"/>
        <end position="400"/>
    </location>
</feature>
<feature type="domain" description="LTD" evidence="3">
    <location>
        <begin position="508"/>
        <end position="621"/>
    </location>
</feature>
<feature type="region of interest" description="Head">
    <location>
        <begin position="20"/>
        <end position="55"/>
    </location>
</feature>
<feature type="region of interest" description="Coil 1A">
    <location>
        <begin position="56"/>
        <end position="87"/>
    </location>
</feature>
<feature type="region of interest" description="Linker 1">
    <location>
        <begin position="88"/>
        <end position="100"/>
    </location>
</feature>
<feature type="region of interest" description="Coil 1B">
    <location>
        <begin position="101"/>
        <end position="238"/>
    </location>
</feature>
<feature type="region of interest" description="Linker 12">
    <location>
        <begin position="239"/>
        <end position="256"/>
    </location>
</feature>
<feature type="region of interest" description="Coil 2">
    <location>
        <begin position="257"/>
        <end position="400"/>
    </location>
</feature>
<feature type="region of interest" description="Tail">
    <location>
        <begin position="401"/>
        <end position="549"/>
    </location>
</feature>
<sequence>MSTYGYTHYTSTSQGRGLASGAYTSGFGGLVSGMSSAGAICTTQIRDAREREKREIGLLNDRLADYIEKVRFLEAQNQCLSHDIDILRRGFSGGGHVSGLYDTEIAQAKRILEQTIAGHAAFDRDIAALGSDIDAIRKKWIDAVNAVKAHREDHDVDLDRLAKVEAEISLFKRKIRIVEEDVIRIRRENDGIYNEIARIKQLTHNEIALKNERSLNVQDLLQRIKLLQTENSTRIEQELVFIRRDTTAENRDYFRHELQAAIRDIRADYEAISIRNRNDIEVWYREQIRKIQTESKPVNQDLYKEELASIRTTVTNVKSRLAEVEGRNFFLEKLIEDLRNNEESKLYEISLAEKDAQIARLREQCTELSIQMERLCDNEISLRAEIERYRVLLNGANVTTYVSNTHPSGVSVGGIVGTTRVISQTTRTNSSSNTSYSGVPASRTGYSVGGNIGGISVGGTIGGVSVGGNVGAHGASGHVSGGAAGSVSSLVSEKRPDRVHDEKGVDASGRSFHSWYLGTISINQITPSYIELKNICKIRRVDVGGFRVEQYINGELLGSAQINVPLILDPQEVVRIHHRHGKYLGQFFMDVDAFDNSTASRTSMYNYTEPNEERAWFVYLN</sequence>
<dbReference type="EMBL" id="HE600971">
    <property type="protein sequence ID" value="CAP28026.2"/>
    <property type="status" value="ALT_SEQ"/>
    <property type="molecule type" value="Genomic_DNA"/>
</dbReference>
<dbReference type="SMR" id="Q5WN60"/>
<dbReference type="FunCoup" id="Q5WN60">
    <property type="interactions" value="6"/>
</dbReference>
<dbReference type="STRING" id="6238.Q5WN60"/>
<dbReference type="WormBase" id="CBG08136a">
    <property type="protein sequence ID" value="CBP44364"/>
    <property type="gene ID" value="WBGene00029993"/>
    <property type="gene designation" value="Cbr-ifc-2"/>
</dbReference>
<dbReference type="eggNOG" id="KOG0977">
    <property type="taxonomic scope" value="Eukaryota"/>
</dbReference>
<dbReference type="HOGENOM" id="CLU_279425_0_0_1"/>
<dbReference type="InParanoid" id="Q5WN60"/>
<dbReference type="Proteomes" id="UP000008549">
    <property type="component" value="Unassembled WGS sequence"/>
</dbReference>
<dbReference type="GO" id="GO:0005737">
    <property type="term" value="C:cytoplasm"/>
    <property type="evidence" value="ECO:0007669"/>
    <property type="project" value="UniProtKB-SubCell"/>
</dbReference>
<dbReference type="GO" id="GO:0005882">
    <property type="term" value="C:intermediate filament"/>
    <property type="evidence" value="ECO:0007669"/>
    <property type="project" value="UniProtKB-KW"/>
</dbReference>
<dbReference type="GO" id="GO:0005635">
    <property type="term" value="C:nuclear envelope"/>
    <property type="evidence" value="ECO:0000318"/>
    <property type="project" value="GO_Central"/>
</dbReference>
<dbReference type="GO" id="GO:0005652">
    <property type="term" value="C:nuclear lamina"/>
    <property type="evidence" value="ECO:0000318"/>
    <property type="project" value="GO_Central"/>
</dbReference>
<dbReference type="GO" id="GO:0005200">
    <property type="term" value="F:structural constituent of cytoskeleton"/>
    <property type="evidence" value="ECO:0000318"/>
    <property type="project" value="GO_Central"/>
</dbReference>
<dbReference type="GO" id="GO:0031507">
    <property type="term" value="P:heterochromatin formation"/>
    <property type="evidence" value="ECO:0000318"/>
    <property type="project" value="GO_Central"/>
</dbReference>
<dbReference type="GO" id="GO:0006998">
    <property type="term" value="P:nuclear envelope organization"/>
    <property type="evidence" value="ECO:0000318"/>
    <property type="project" value="GO_Central"/>
</dbReference>
<dbReference type="GO" id="GO:0007097">
    <property type="term" value="P:nuclear migration"/>
    <property type="evidence" value="ECO:0000318"/>
    <property type="project" value="GO_Central"/>
</dbReference>
<dbReference type="GO" id="GO:0051664">
    <property type="term" value="P:nuclear pore localization"/>
    <property type="evidence" value="ECO:0000318"/>
    <property type="project" value="GO_Central"/>
</dbReference>
<dbReference type="GO" id="GO:0090435">
    <property type="term" value="P:protein localization to nuclear envelope"/>
    <property type="evidence" value="ECO:0000318"/>
    <property type="project" value="GO_Central"/>
</dbReference>
<dbReference type="Gene3D" id="1.20.5.500">
    <property type="entry name" value="Single helix bin"/>
    <property type="match status" value="1"/>
</dbReference>
<dbReference type="InterPro" id="IPR039008">
    <property type="entry name" value="IF_rod_dom"/>
</dbReference>
<dbReference type="InterPro" id="IPR001322">
    <property type="entry name" value="Lamin_tail_dom"/>
</dbReference>
<dbReference type="InterPro" id="IPR036415">
    <property type="entry name" value="Lamin_tail_dom_sf"/>
</dbReference>
<dbReference type="PANTHER" id="PTHR45721:SF1">
    <property type="entry name" value="INTERMEDIATE FILAMENT PROTEIN IFC-2"/>
    <property type="match status" value="1"/>
</dbReference>
<dbReference type="PANTHER" id="PTHR45721">
    <property type="entry name" value="LAMIN DM0-RELATED"/>
    <property type="match status" value="1"/>
</dbReference>
<dbReference type="Pfam" id="PF00038">
    <property type="entry name" value="Filament"/>
    <property type="match status" value="1"/>
</dbReference>
<dbReference type="SMART" id="SM01391">
    <property type="entry name" value="Filament"/>
    <property type="match status" value="1"/>
</dbReference>
<dbReference type="SUPFAM" id="SSF64593">
    <property type="entry name" value="Intermediate filament protein, coiled coil region"/>
    <property type="match status" value="2"/>
</dbReference>
<dbReference type="SUPFAM" id="SSF74853">
    <property type="entry name" value="Lamin A/C globular tail domain"/>
    <property type="match status" value="1"/>
</dbReference>
<dbReference type="PROSITE" id="PS51842">
    <property type="entry name" value="IF_ROD_2"/>
    <property type="match status" value="1"/>
</dbReference>
<dbReference type="PROSITE" id="PS51841">
    <property type="entry name" value="LTD"/>
    <property type="match status" value="1"/>
</dbReference>
<gene>
    <name evidence="2" type="primary">ifc-2</name>
    <name type="ORF">CBG08136</name>
</gene>
<protein>
    <recommendedName>
        <fullName>Intermediate filament protein ifc-2</fullName>
    </recommendedName>
</protein>